<accession>Q865R3</accession>
<organism>
    <name type="scientific">Bos taurus</name>
    <name type="common">Bovine</name>
    <dbReference type="NCBI Taxonomy" id="9913"/>
    <lineage>
        <taxon>Eukaryota</taxon>
        <taxon>Metazoa</taxon>
        <taxon>Chordata</taxon>
        <taxon>Craniata</taxon>
        <taxon>Vertebrata</taxon>
        <taxon>Euteleostomi</taxon>
        <taxon>Mammalia</taxon>
        <taxon>Eutheria</taxon>
        <taxon>Laurasiatheria</taxon>
        <taxon>Artiodactyla</taxon>
        <taxon>Ruminantia</taxon>
        <taxon>Pecora</taxon>
        <taxon>Bovidae</taxon>
        <taxon>Bovinae</taxon>
        <taxon>Bos</taxon>
    </lineage>
</organism>
<dbReference type="EMBL" id="AB091679">
    <property type="protein sequence ID" value="BAC67167.1"/>
    <property type="molecule type" value="mRNA"/>
</dbReference>
<dbReference type="BMRB" id="Q865R3"/>
<dbReference type="SMR" id="Q865R3"/>
<dbReference type="FunCoup" id="Q865R3">
    <property type="interactions" value="15"/>
</dbReference>
<dbReference type="GlyCosmos" id="Q865R3">
    <property type="glycosylation" value="3 sites, No reported glycans"/>
</dbReference>
<dbReference type="GlyGen" id="Q865R3">
    <property type="glycosylation" value="3 sites"/>
</dbReference>
<dbReference type="InParanoid" id="Q865R3"/>
<dbReference type="OrthoDB" id="5970915at2759"/>
<dbReference type="Proteomes" id="UP000009136">
    <property type="component" value="Unplaced"/>
</dbReference>
<dbReference type="GO" id="GO:0016323">
    <property type="term" value="C:basolateral plasma membrane"/>
    <property type="evidence" value="ECO:0007669"/>
    <property type="project" value="UniProtKB-SubCell"/>
</dbReference>
<dbReference type="GO" id="GO:0005789">
    <property type="term" value="C:endoplasmic reticulum membrane"/>
    <property type="evidence" value="ECO:0007669"/>
    <property type="project" value="UniProtKB-SubCell"/>
</dbReference>
<dbReference type="GO" id="GO:0005886">
    <property type="term" value="C:plasma membrane"/>
    <property type="evidence" value="ECO:0000250"/>
    <property type="project" value="UniProtKB"/>
</dbReference>
<dbReference type="GO" id="GO:0005537">
    <property type="term" value="F:D-mannose binding"/>
    <property type="evidence" value="ECO:0007669"/>
    <property type="project" value="UniProtKB-KW"/>
</dbReference>
<dbReference type="GO" id="GO:0038023">
    <property type="term" value="F:signaling receptor activity"/>
    <property type="evidence" value="ECO:0000250"/>
    <property type="project" value="UniProtKB"/>
</dbReference>
<dbReference type="GO" id="GO:0001525">
    <property type="term" value="P:angiogenesis"/>
    <property type="evidence" value="ECO:0007669"/>
    <property type="project" value="UniProtKB-KW"/>
</dbReference>
<dbReference type="GO" id="GO:0061154">
    <property type="term" value="P:endothelial tube morphogenesis"/>
    <property type="evidence" value="ECO:0000250"/>
    <property type="project" value="UniProtKB"/>
</dbReference>
<dbReference type="GO" id="GO:0010595">
    <property type="term" value="P:positive regulation of endothelial cell migration"/>
    <property type="evidence" value="ECO:0000250"/>
    <property type="project" value="UniProtKB"/>
</dbReference>
<dbReference type="GO" id="GO:0010575">
    <property type="term" value="P:positive regulation of vascular endothelial growth factor production"/>
    <property type="evidence" value="ECO:0000250"/>
    <property type="project" value="UniProtKB"/>
</dbReference>
<dbReference type="GO" id="GO:0072659">
    <property type="term" value="P:protein localization to plasma membrane"/>
    <property type="evidence" value="ECO:0000250"/>
    <property type="project" value="UniProtKB"/>
</dbReference>
<dbReference type="FunFam" id="2.60.40.10:FF:001329">
    <property type="entry name" value="Basigin"/>
    <property type="match status" value="1"/>
</dbReference>
<dbReference type="FunFam" id="2.60.40.10:FF:000387">
    <property type="entry name" value="Neuroplastin b"/>
    <property type="match status" value="1"/>
</dbReference>
<dbReference type="Gene3D" id="2.60.40.10">
    <property type="entry name" value="Immunoglobulins"/>
    <property type="match status" value="2"/>
</dbReference>
<dbReference type="InterPro" id="IPR007110">
    <property type="entry name" value="Ig-like_dom"/>
</dbReference>
<dbReference type="InterPro" id="IPR036179">
    <property type="entry name" value="Ig-like_dom_sf"/>
</dbReference>
<dbReference type="InterPro" id="IPR013783">
    <property type="entry name" value="Ig-like_fold"/>
</dbReference>
<dbReference type="InterPro" id="IPR003599">
    <property type="entry name" value="Ig_sub"/>
</dbReference>
<dbReference type="PANTHER" id="PTHR10075:SF107">
    <property type="entry name" value="BASIGIN"/>
    <property type="match status" value="1"/>
</dbReference>
<dbReference type="PANTHER" id="PTHR10075">
    <property type="entry name" value="BASIGIN RELATED"/>
    <property type="match status" value="1"/>
</dbReference>
<dbReference type="Pfam" id="PF13927">
    <property type="entry name" value="Ig_3"/>
    <property type="match status" value="1"/>
</dbReference>
<dbReference type="PRINTS" id="PR01856">
    <property type="entry name" value="BASIGIN"/>
</dbReference>
<dbReference type="SMART" id="SM00409">
    <property type="entry name" value="IG"/>
    <property type="match status" value="1"/>
</dbReference>
<dbReference type="SUPFAM" id="SSF48726">
    <property type="entry name" value="Immunoglobulin"/>
    <property type="match status" value="1"/>
</dbReference>
<dbReference type="PROSITE" id="PS50835">
    <property type="entry name" value="IG_LIKE"/>
    <property type="match status" value="2"/>
</dbReference>
<reference key="1">
    <citation type="submission" date="2002-09" db="EMBL/GenBank/DDBJ databases">
        <title>Expression of EMMPRIN mRNA in bovine endometrium.</title>
        <authorList>
            <person name="Sato T."/>
            <person name="Takita M."/>
            <person name="Noguchi Y."/>
            <person name="Konno S."/>
            <person name="Hirata M."/>
            <person name="Hashizume K."/>
            <person name="Ito A."/>
        </authorList>
    </citation>
    <scope>NUCLEOTIDE SEQUENCE [MRNA]</scope>
    <source>
        <tissue>Endometrium</tissue>
    </source>
</reference>
<name>BASI_BOVIN</name>
<protein>
    <recommendedName>
        <fullName>Basigin</fullName>
    </recommendedName>
    <alternativeName>
        <fullName>EMMPRIN</fullName>
    </alternativeName>
    <cdAntigenName>CD147</cdAntigenName>
</protein>
<comment type="function">
    <text evidence="3">Signaling receptor for cyclophilins, essential for PPIA/CYPA and PPIB/CYPB-dependent signaling related to chemotaxis and adhesion of immune cells (By similarity). Plays an important role in targeting the monocarboxylate transporters SLC16A1/GLUT1, SLC16A3, SLC16A8, SLC16A11 and SLC16A12 to the plasma membrane (By similarity). Acts as a coreceptor for vascular endothelial growth factor receptor 2 (KDR/VEGFR2) in endothelial cells enhancing its VEGFA-mediated activation and downstream signaling (By similarity). Promotes angiogenesis through EPAS1/HIF2A-mediated up-regulation of VEGFA and KDR/VEGFR2 in endothelial cells (By similarity).</text>
</comment>
<comment type="subunit">
    <text evidence="1 2 3">Homooligomer (By similarity). Interacts with VEGFA, KDR/VEGFR2, PPIA/CYPA, SLC16A12, SLC16A11, ATP1B2, MAG, L1CAM and AJAP1 (By similarity). Interacts with SLC16A1; interaction mediates SLC16A1 targeting to the plasma membrane (By similarity). Interacts with SLC16A3; interaction mediates SLC16A3 targeting to the plasma membrane (By similarity). Interacts with PPIL2; regulates BSG transport to the cell membrane (By similarity). Interacts with XKR8; promoting its localization at the cell membrane (By similarity). Interacts with SLC16A6; this interaction mediates targeting to the plasma membrane.</text>
</comment>
<comment type="subcellular location">
    <subcellularLocation>
        <location evidence="3">Cell membrane</location>
        <topology evidence="2">Single-pass type I membrane protein</topology>
    </subcellularLocation>
    <subcellularLocation>
        <location evidence="3">Endoplasmic reticulum membrane</location>
        <topology evidence="2">Single-pass type I membrane protein</topology>
    </subcellularLocation>
    <subcellularLocation>
        <location evidence="3">Basolateral cell membrane</location>
        <topology evidence="2">Single-pass type I membrane protein</topology>
    </subcellularLocation>
</comment>
<proteinExistence type="evidence at transcript level"/>
<evidence type="ECO:0000250" key="1">
    <source>
        <dbReference type="UniProtKB" id="P18572"/>
    </source>
</evidence>
<evidence type="ECO:0000250" key="2">
    <source>
        <dbReference type="UniProtKB" id="P26453"/>
    </source>
</evidence>
<evidence type="ECO:0000250" key="3">
    <source>
        <dbReference type="UniProtKB" id="P35613"/>
    </source>
</evidence>
<evidence type="ECO:0000255" key="4"/>
<evidence type="ECO:0000255" key="5">
    <source>
        <dbReference type="PROSITE-ProRule" id="PRU00114"/>
    </source>
</evidence>
<keyword id="KW-0037">Angiogenesis</keyword>
<keyword id="KW-1003">Cell membrane</keyword>
<keyword id="KW-1015">Disulfide bond</keyword>
<keyword id="KW-0256">Endoplasmic reticulum</keyword>
<keyword id="KW-0325">Glycoprotein</keyword>
<keyword id="KW-0393">Immunoglobulin domain</keyword>
<keyword id="KW-0430">Lectin</keyword>
<keyword id="KW-0465">Mannose-binding</keyword>
<keyword id="KW-0472">Membrane</keyword>
<keyword id="KW-0675">Receptor</keyword>
<keyword id="KW-1185">Reference proteome</keyword>
<keyword id="KW-0732">Signal</keyword>
<gene>
    <name type="primary">BSG</name>
</gene>
<feature type="signal peptide" evidence="4">
    <location>
        <begin position="1"/>
        <end position="18"/>
    </location>
</feature>
<feature type="chain" id="PRO_0000014516" description="Basigin">
    <location>
        <begin position="19"/>
        <end position="205" status="greater than"/>
    </location>
</feature>
<feature type="topological domain" description="Extracellular" evidence="2">
    <location>
        <begin position="19"/>
        <end position="205" status="greater than"/>
    </location>
</feature>
<feature type="domain" description="Ig-like C2-type">
    <location>
        <begin position="19"/>
        <end position="103"/>
    </location>
</feature>
<feature type="domain" description="Ig-like V-type">
    <location>
        <begin position="105"/>
        <end position="199"/>
    </location>
</feature>
<feature type="glycosylation site" description="N-linked (GlcNAc...) asparagine" evidence="3">
    <location>
        <position position="44"/>
    </location>
</feature>
<feature type="glycosylation site" description="N-linked (GlcNAc...) asparagine" evidence="3">
    <location>
        <position position="152"/>
    </location>
</feature>
<feature type="glycosylation site" description="N-linked (GlcNAc...) asparagine" evidence="4">
    <location>
        <position position="186"/>
    </location>
</feature>
<feature type="disulfide bond" evidence="5">
    <location>
        <begin position="41"/>
        <end position="87"/>
    </location>
</feature>
<feature type="disulfide bond" evidence="5">
    <location>
        <begin position="126"/>
        <end position="185"/>
    </location>
</feature>
<feature type="non-terminal residue">
    <location>
        <position position="205"/>
    </location>
</feature>
<sequence length="205" mass="22119">MAAALFVLLGFALLGTHGASGAAGTVFTTVEDLGSKILLTCSLNDSATEVTGHRWLKGGVVLKEDALPGQKTEFKVDSDDQWGEYSCVFLPEPMGTANIQLHGPPRVKAVKSSEHINEGETAMLVCKSESVPPVTDWAWYKITDSEDKALMNGSESRFFVSSSQGRSELHIENLNMEADPGQYRCNGTSSKGSDQAIITLRVRSH</sequence>